<organism>
    <name type="scientific">Listeria monocytogenes serotype 4b (strain F2365)</name>
    <dbReference type="NCBI Taxonomy" id="265669"/>
    <lineage>
        <taxon>Bacteria</taxon>
        <taxon>Bacillati</taxon>
        <taxon>Bacillota</taxon>
        <taxon>Bacilli</taxon>
        <taxon>Bacillales</taxon>
        <taxon>Listeriaceae</taxon>
        <taxon>Listeria</taxon>
    </lineage>
</organism>
<proteinExistence type="inferred from homology"/>
<accession>Q71XU6</accession>
<comment type="function">
    <text evidence="1">Together with its co-chaperonin GroES, plays an essential role in assisting protein folding. The GroEL-GroES system forms a nano-cage that allows encapsulation of the non-native substrate proteins and provides a physical environment optimized to promote and accelerate protein folding.</text>
</comment>
<comment type="catalytic activity">
    <reaction evidence="1">
        <text>ATP + H2O + a folded polypeptide = ADP + phosphate + an unfolded polypeptide.</text>
        <dbReference type="EC" id="5.6.1.7"/>
    </reaction>
</comment>
<comment type="subunit">
    <text evidence="1">Forms a cylinder of 14 subunits composed of two heptameric rings stacked back-to-back. Interacts with the co-chaperonin GroES.</text>
</comment>
<comment type="subcellular location">
    <subcellularLocation>
        <location evidence="1">Cytoplasm</location>
    </subcellularLocation>
</comment>
<comment type="similarity">
    <text evidence="1">Belongs to the chaperonin (HSP60) family.</text>
</comment>
<gene>
    <name evidence="1" type="primary">groEL</name>
    <name evidence="1" type="synonym">groL</name>
    <name type="ordered locus">LMOf2365_2099</name>
</gene>
<evidence type="ECO:0000255" key="1">
    <source>
        <dbReference type="HAMAP-Rule" id="MF_00600"/>
    </source>
</evidence>
<evidence type="ECO:0000256" key="2">
    <source>
        <dbReference type="SAM" id="MobiDB-lite"/>
    </source>
</evidence>
<keyword id="KW-0067">ATP-binding</keyword>
<keyword id="KW-0143">Chaperone</keyword>
<keyword id="KW-0963">Cytoplasm</keyword>
<keyword id="KW-0413">Isomerase</keyword>
<keyword id="KW-0547">Nucleotide-binding</keyword>
<dbReference type="EC" id="5.6.1.7" evidence="1"/>
<dbReference type="EMBL" id="AE017262">
    <property type="protein sequence ID" value="AAT04869.1"/>
    <property type="molecule type" value="Genomic_DNA"/>
</dbReference>
<dbReference type="RefSeq" id="WP_003726503.1">
    <property type="nucleotide sequence ID" value="NC_002973.6"/>
</dbReference>
<dbReference type="SMR" id="Q71XU6"/>
<dbReference type="KEGG" id="lmf:LMOf2365_2099"/>
<dbReference type="HOGENOM" id="CLU_016503_3_0_9"/>
<dbReference type="GO" id="GO:0005737">
    <property type="term" value="C:cytoplasm"/>
    <property type="evidence" value="ECO:0007669"/>
    <property type="project" value="UniProtKB-SubCell"/>
</dbReference>
<dbReference type="GO" id="GO:0005524">
    <property type="term" value="F:ATP binding"/>
    <property type="evidence" value="ECO:0007669"/>
    <property type="project" value="UniProtKB-UniRule"/>
</dbReference>
<dbReference type="GO" id="GO:0140662">
    <property type="term" value="F:ATP-dependent protein folding chaperone"/>
    <property type="evidence" value="ECO:0007669"/>
    <property type="project" value="InterPro"/>
</dbReference>
<dbReference type="GO" id="GO:0016853">
    <property type="term" value="F:isomerase activity"/>
    <property type="evidence" value="ECO:0007669"/>
    <property type="project" value="UniProtKB-KW"/>
</dbReference>
<dbReference type="GO" id="GO:0051082">
    <property type="term" value="F:unfolded protein binding"/>
    <property type="evidence" value="ECO:0007669"/>
    <property type="project" value="UniProtKB-UniRule"/>
</dbReference>
<dbReference type="GO" id="GO:0042026">
    <property type="term" value="P:protein refolding"/>
    <property type="evidence" value="ECO:0007669"/>
    <property type="project" value="UniProtKB-UniRule"/>
</dbReference>
<dbReference type="CDD" id="cd03344">
    <property type="entry name" value="GroEL"/>
    <property type="match status" value="1"/>
</dbReference>
<dbReference type="FunFam" id="1.10.560.10:FF:000001">
    <property type="entry name" value="60 kDa chaperonin"/>
    <property type="match status" value="1"/>
</dbReference>
<dbReference type="FunFam" id="3.50.7.10:FF:000001">
    <property type="entry name" value="60 kDa chaperonin"/>
    <property type="match status" value="1"/>
</dbReference>
<dbReference type="Gene3D" id="3.50.7.10">
    <property type="entry name" value="GroEL"/>
    <property type="match status" value="1"/>
</dbReference>
<dbReference type="Gene3D" id="1.10.560.10">
    <property type="entry name" value="GroEL-like equatorial domain"/>
    <property type="match status" value="1"/>
</dbReference>
<dbReference type="Gene3D" id="3.30.260.10">
    <property type="entry name" value="TCP-1-like chaperonin intermediate domain"/>
    <property type="match status" value="1"/>
</dbReference>
<dbReference type="HAMAP" id="MF_00600">
    <property type="entry name" value="CH60"/>
    <property type="match status" value="1"/>
</dbReference>
<dbReference type="InterPro" id="IPR018370">
    <property type="entry name" value="Chaperonin_Cpn60_CS"/>
</dbReference>
<dbReference type="InterPro" id="IPR001844">
    <property type="entry name" value="Cpn60/GroEL"/>
</dbReference>
<dbReference type="InterPro" id="IPR002423">
    <property type="entry name" value="Cpn60/GroEL/TCP-1"/>
</dbReference>
<dbReference type="InterPro" id="IPR027409">
    <property type="entry name" value="GroEL-like_apical_dom_sf"/>
</dbReference>
<dbReference type="InterPro" id="IPR027413">
    <property type="entry name" value="GROEL-like_equatorial_sf"/>
</dbReference>
<dbReference type="InterPro" id="IPR027410">
    <property type="entry name" value="TCP-1-like_intermed_sf"/>
</dbReference>
<dbReference type="NCBIfam" id="TIGR02348">
    <property type="entry name" value="GroEL"/>
    <property type="match status" value="1"/>
</dbReference>
<dbReference type="NCBIfam" id="NF000592">
    <property type="entry name" value="PRK00013.1"/>
    <property type="match status" value="1"/>
</dbReference>
<dbReference type="NCBIfam" id="NF009487">
    <property type="entry name" value="PRK12849.1"/>
    <property type="match status" value="1"/>
</dbReference>
<dbReference type="NCBIfam" id="NF009488">
    <property type="entry name" value="PRK12850.1"/>
    <property type="match status" value="1"/>
</dbReference>
<dbReference type="NCBIfam" id="NF009489">
    <property type="entry name" value="PRK12851.1"/>
    <property type="match status" value="1"/>
</dbReference>
<dbReference type="PANTHER" id="PTHR45633">
    <property type="entry name" value="60 KDA HEAT SHOCK PROTEIN, MITOCHONDRIAL"/>
    <property type="match status" value="1"/>
</dbReference>
<dbReference type="Pfam" id="PF00118">
    <property type="entry name" value="Cpn60_TCP1"/>
    <property type="match status" value="1"/>
</dbReference>
<dbReference type="PRINTS" id="PR00298">
    <property type="entry name" value="CHAPERONIN60"/>
</dbReference>
<dbReference type="SUPFAM" id="SSF52029">
    <property type="entry name" value="GroEL apical domain-like"/>
    <property type="match status" value="1"/>
</dbReference>
<dbReference type="SUPFAM" id="SSF48592">
    <property type="entry name" value="GroEL equatorial domain-like"/>
    <property type="match status" value="1"/>
</dbReference>
<dbReference type="SUPFAM" id="SSF54849">
    <property type="entry name" value="GroEL-intermediate domain like"/>
    <property type="match status" value="1"/>
</dbReference>
<dbReference type="PROSITE" id="PS00296">
    <property type="entry name" value="CHAPERONINS_CPN60"/>
    <property type="match status" value="1"/>
</dbReference>
<reference key="1">
    <citation type="journal article" date="2004" name="Nucleic Acids Res.">
        <title>Whole genome comparisons of serotype 4b and 1/2a strains of the food-borne pathogen Listeria monocytogenes reveal new insights into the core genome components of this species.</title>
        <authorList>
            <person name="Nelson K.E."/>
            <person name="Fouts D.E."/>
            <person name="Mongodin E.F."/>
            <person name="Ravel J."/>
            <person name="DeBoy R.T."/>
            <person name="Kolonay J.F."/>
            <person name="Rasko D.A."/>
            <person name="Angiuoli S.V."/>
            <person name="Gill S.R."/>
            <person name="Paulsen I.T."/>
            <person name="Peterson J.D."/>
            <person name="White O."/>
            <person name="Nelson W.C."/>
            <person name="Nierman W.C."/>
            <person name="Beanan M.J."/>
            <person name="Brinkac L.M."/>
            <person name="Daugherty S.C."/>
            <person name="Dodson R.J."/>
            <person name="Durkin A.S."/>
            <person name="Madupu R."/>
            <person name="Haft D.H."/>
            <person name="Selengut J."/>
            <person name="Van Aken S.E."/>
            <person name="Khouri H.M."/>
            <person name="Fedorova N."/>
            <person name="Forberger H.A."/>
            <person name="Tran B."/>
            <person name="Kathariou S."/>
            <person name="Wonderling L.D."/>
            <person name="Uhlich G.A."/>
            <person name="Bayles D.O."/>
            <person name="Luchansky J.B."/>
            <person name="Fraser C.M."/>
        </authorList>
    </citation>
    <scope>NUCLEOTIDE SEQUENCE [LARGE SCALE GENOMIC DNA]</scope>
    <source>
        <strain>F2365</strain>
    </source>
</reference>
<protein>
    <recommendedName>
        <fullName evidence="1">Chaperonin GroEL</fullName>
        <ecNumber evidence="1">5.6.1.7</ecNumber>
    </recommendedName>
    <alternativeName>
        <fullName evidence="1">60 kDa chaperonin</fullName>
    </alternativeName>
    <alternativeName>
        <fullName evidence="1">Chaperonin-60</fullName>
        <shortName evidence="1">Cpn60</shortName>
    </alternativeName>
</protein>
<feature type="chain" id="PRO_0000063413" description="Chaperonin GroEL">
    <location>
        <begin position="1"/>
        <end position="542"/>
    </location>
</feature>
<feature type="region of interest" description="Disordered" evidence="2">
    <location>
        <begin position="522"/>
        <end position="542"/>
    </location>
</feature>
<feature type="binding site" evidence="1">
    <location>
        <begin position="29"/>
        <end position="32"/>
    </location>
    <ligand>
        <name>ATP</name>
        <dbReference type="ChEBI" id="CHEBI:30616"/>
    </ligand>
</feature>
<feature type="binding site" evidence="1">
    <location>
        <begin position="86"/>
        <end position="90"/>
    </location>
    <ligand>
        <name>ATP</name>
        <dbReference type="ChEBI" id="CHEBI:30616"/>
    </ligand>
</feature>
<feature type="binding site" evidence="1">
    <location>
        <position position="413"/>
    </location>
    <ligand>
        <name>ATP</name>
        <dbReference type="ChEBI" id="CHEBI:30616"/>
    </ligand>
</feature>
<feature type="binding site" evidence="1">
    <location>
        <begin position="476"/>
        <end position="478"/>
    </location>
    <ligand>
        <name>ATP</name>
        <dbReference type="ChEBI" id="CHEBI:30616"/>
    </ligand>
</feature>
<feature type="binding site" evidence="1">
    <location>
        <position position="492"/>
    </location>
    <ligand>
        <name>ATP</name>
        <dbReference type="ChEBI" id="CHEBI:30616"/>
    </ligand>
</feature>
<name>CH60_LISMF</name>
<sequence>MAKDIKFSEDARRAMLRGVDQLANAVKVTLGPKGRNVVLEKKFGSPLITNDGVTIAKEIELEDPFENMGAKLVSEVASKTNDVAGDGTTTATVLAQAMIQEGLKNVTAGANPVGVRRGIEKAVATAIEELKAISKPIESKESIAQVAAISSGDEEVGKLIAEAMERVGNDGVITIEESKGFATELDVVEGMQFDRGYTSPYMVTDSDKMEAVLEKPYILITDKKINNIQEILPVLEQVVQQGRPMLIIAEDVEGEAQATLVLNKLRGTFNVVAVKAPGFGDRRKAMLEDIAILTGGQVITEDLGLELKTATVDQLGTANKVVVTKDDTTIVEGAGDSTQISARVNQIRAQMEETTSEFDREKLQERLAKLAGGVAVVKVGAATETELKERKLRIEDALNSTRAAVEEGIVAGGGTALVSIYNKVAALEAEGDVETGINIVLRSLEEPVRQIAHNAGLEGSVIVERLKHEAVGVGFNAANGEWVNMIDAGIVDPTKVTRSALQNASSVAALLLTTEAVVADKPDENGPAAVPDMGMGGMGGMM</sequence>